<organism>
    <name type="scientific">Thermus thermophilus</name>
    <dbReference type="NCBI Taxonomy" id="274"/>
    <lineage>
        <taxon>Bacteria</taxon>
        <taxon>Thermotogati</taxon>
        <taxon>Deinococcota</taxon>
        <taxon>Deinococci</taxon>
        <taxon>Thermales</taxon>
        <taxon>Thermaceae</taxon>
        <taxon>Thermus</taxon>
    </lineage>
</organism>
<sequence>MRVKMHVKKGDTVLVASGKYKGRVGKVKEVLPKKYAVIVEGVNIVKKAVRVSPKYPQGGFIEKEAPLHASKVRPICPACGKPTRVRKKFLENGKKIRVCAKCGGALDTEE</sequence>
<gene>
    <name type="primary">rplX</name>
    <name type="synonym">rpl24</name>
</gene>
<reference key="1">
    <citation type="journal article" date="1997" name="Gene">
        <title>Sequencing and analysis of the Thermus thermophilus ribosomal protein gene cluster equivalent to the spectinomycin operon.</title>
        <authorList>
            <person name="Vysotskaya V.S."/>
            <person name="Shcherbakov D.V."/>
            <person name="Garber M.B."/>
        </authorList>
    </citation>
    <scope>NUCLEOTIDE SEQUENCE [GENOMIC DNA]</scope>
    <source>
        <strain>VK1</strain>
    </source>
</reference>
<name>RL24_THETH</name>
<keyword id="KW-0687">Ribonucleoprotein</keyword>
<keyword id="KW-0689">Ribosomal protein</keyword>
<keyword id="KW-0694">RNA-binding</keyword>
<keyword id="KW-0699">rRNA-binding</keyword>
<feature type="chain" id="PRO_0000130742" description="Large ribosomal subunit protein uL24">
    <location>
        <begin position="1"/>
        <end position="110"/>
    </location>
</feature>
<proteinExistence type="inferred from homology"/>
<protein>
    <recommendedName>
        <fullName evidence="2">Large ribosomal subunit protein uL24</fullName>
    </recommendedName>
    <alternativeName>
        <fullName>50S ribosomal protein L24</fullName>
    </alternativeName>
</protein>
<comment type="function">
    <text evidence="1">One of two assembly initiator proteins, it binds directly to the 5'-end of the 23S rRNA, where it nucleates assembly of the 50S subunit.</text>
</comment>
<comment type="function">
    <text evidence="1">One of the proteins that surrounds the polypeptide exit tunnel on the outside of the subunit.</text>
</comment>
<comment type="subunit">
    <text evidence="1">Part of the 50S ribosomal subunit.</text>
</comment>
<comment type="similarity">
    <text evidence="2">Belongs to the universal ribosomal protein uL24 family.</text>
</comment>
<dbReference type="EMBL" id="Z31726">
    <property type="protein sequence ID" value="CAA83517.1"/>
    <property type="molecule type" value="Genomic_DNA"/>
</dbReference>
<dbReference type="PIR" id="S43192">
    <property type="entry name" value="S43192"/>
</dbReference>
<dbReference type="RefSeq" id="WP_011173707.1">
    <property type="nucleotide sequence ID" value="NZ_DFSU01000131.1"/>
</dbReference>
<dbReference type="SMR" id="Q56435"/>
<dbReference type="IntAct" id="Q56435">
    <property type="interactions" value="1"/>
</dbReference>
<dbReference type="GeneID" id="3169836"/>
<dbReference type="OMA" id="HISNLML"/>
<dbReference type="GO" id="GO:1990904">
    <property type="term" value="C:ribonucleoprotein complex"/>
    <property type="evidence" value="ECO:0007669"/>
    <property type="project" value="UniProtKB-KW"/>
</dbReference>
<dbReference type="GO" id="GO:0005840">
    <property type="term" value="C:ribosome"/>
    <property type="evidence" value="ECO:0007669"/>
    <property type="project" value="UniProtKB-KW"/>
</dbReference>
<dbReference type="GO" id="GO:0019843">
    <property type="term" value="F:rRNA binding"/>
    <property type="evidence" value="ECO:0007669"/>
    <property type="project" value="UniProtKB-UniRule"/>
</dbReference>
<dbReference type="GO" id="GO:0003735">
    <property type="term" value="F:structural constituent of ribosome"/>
    <property type="evidence" value="ECO:0007669"/>
    <property type="project" value="InterPro"/>
</dbReference>
<dbReference type="GO" id="GO:0006412">
    <property type="term" value="P:translation"/>
    <property type="evidence" value="ECO:0007669"/>
    <property type="project" value="UniProtKB-UniRule"/>
</dbReference>
<dbReference type="CDD" id="cd06089">
    <property type="entry name" value="KOW_RPL26"/>
    <property type="match status" value="1"/>
</dbReference>
<dbReference type="Gene3D" id="2.30.30.30">
    <property type="match status" value="1"/>
</dbReference>
<dbReference type="HAMAP" id="MF_01326_B">
    <property type="entry name" value="Ribosomal_uL24_B"/>
    <property type="match status" value="1"/>
</dbReference>
<dbReference type="InterPro" id="IPR005824">
    <property type="entry name" value="KOW"/>
</dbReference>
<dbReference type="InterPro" id="IPR014722">
    <property type="entry name" value="Rib_uL2_dom2"/>
</dbReference>
<dbReference type="InterPro" id="IPR003256">
    <property type="entry name" value="Ribosomal_uL24"/>
</dbReference>
<dbReference type="InterPro" id="IPR005825">
    <property type="entry name" value="Ribosomal_uL24_CS"/>
</dbReference>
<dbReference type="InterPro" id="IPR041988">
    <property type="entry name" value="Ribosomal_uL24_KOW"/>
</dbReference>
<dbReference type="InterPro" id="IPR008991">
    <property type="entry name" value="Translation_prot_SH3-like_sf"/>
</dbReference>
<dbReference type="NCBIfam" id="TIGR01079">
    <property type="entry name" value="rplX_bact"/>
    <property type="match status" value="1"/>
</dbReference>
<dbReference type="PANTHER" id="PTHR12903">
    <property type="entry name" value="MITOCHONDRIAL RIBOSOMAL PROTEIN L24"/>
    <property type="match status" value="1"/>
</dbReference>
<dbReference type="Pfam" id="PF00467">
    <property type="entry name" value="KOW"/>
    <property type="match status" value="1"/>
</dbReference>
<dbReference type="Pfam" id="PF17136">
    <property type="entry name" value="ribosomal_L24"/>
    <property type="match status" value="1"/>
</dbReference>
<dbReference type="SMART" id="SM00739">
    <property type="entry name" value="KOW"/>
    <property type="match status" value="1"/>
</dbReference>
<dbReference type="SUPFAM" id="SSF50104">
    <property type="entry name" value="Translation proteins SH3-like domain"/>
    <property type="match status" value="1"/>
</dbReference>
<dbReference type="PROSITE" id="PS01108">
    <property type="entry name" value="RIBOSOMAL_L24"/>
    <property type="match status" value="1"/>
</dbReference>
<evidence type="ECO:0000250" key="1"/>
<evidence type="ECO:0000305" key="2"/>
<accession>Q56435</accession>
<accession>P24318</accession>